<comment type="function">
    <text evidence="1">ATPase subunit of a proteasome-like degradation complex; this subunit has chaperone activity. The binding of ATP and its subsequent hydrolysis by HslU are essential for unfolding of protein substrates subsequently hydrolyzed by HslV. HslU recognizes the N-terminal part of its protein substrates and unfolds these before they are guided to HslV for hydrolysis.</text>
</comment>
<comment type="subunit">
    <text evidence="1">A double ring-shaped homohexamer of HslV is capped on each side by a ring-shaped HslU homohexamer. The assembly of the HslU/HslV complex is dependent on binding of ATP.</text>
</comment>
<comment type="subcellular location">
    <subcellularLocation>
        <location evidence="1">Cytoplasm</location>
    </subcellularLocation>
</comment>
<comment type="similarity">
    <text evidence="1">Belongs to the ClpX chaperone family. HslU subfamily.</text>
</comment>
<gene>
    <name evidence="1" type="primary">hslU</name>
    <name type="ordered locus">XCC3493</name>
</gene>
<proteinExistence type="inferred from homology"/>
<evidence type="ECO:0000255" key="1">
    <source>
        <dbReference type="HAMAP-Rule" id="MF_00249"/>
    </source>
</evidence>
<organism>
    <name type="scientific">Xanthomonas campestris pv. campestris (strain ATCC 33913 / DSM 3586 / NCPPB 528 / LMG 568 / P 25)</name>
    <dbReference type="NCBI Taxonomy" id="190485"/>
    <lineage>
        <taxon>Bacteria</taxon>
        <taxon>Pseudomonadati</taxon>
        <taxon>Pseudomonadota</taxon>
        <taxon>Gammaproteobacteria</taxon>
        <taxon>Lysobacterales</taxon>
        <taxon>Lysobacteraceae</taxon>
        <taxon>Xanthomonas</taxon>
    </lineage>
</organism>
<dbReference type="EMBL" id="AE008922">
    <property type="protein sequence ID" value="AAM42763.1"/>
    <property type="molecule type" value="Genomic_DNA"/>
</dbReference>
<dbReference type="RefSeq" id="NP_638839.1">
    <property type="nucleotide sequence ID" value="NC_003902.1"/>
</dbReference>
<dbReference type="RefSeq" id="WP_011038587.1">
    <property type="nucleotide sequence ID" value="NC_003902.1"/>
</dbReference>
<dbReference type="SMR" id="Q8P552"/>
<dbReference type="STRING" id="190485.XCC3493"/>
<dbReference type="EnsemblBacteria" id="AAM42763">
    <property type="protein sequence ID" value="AAM42763"/>
    <property type="gene ID" value="XCC3493"/>
</dbReference>
<dbReference type="KEGG" id="xcc:XCC3493"/>
<dbReference type="PATRIC" id="fig|190485.4.peg.3736"/>
<dbReference type="eggNOG" id="COG1220">
    <property type="taxonomic scope" value="Bacteria"/>
</dbReference>
<dbReference type="HOGENOM" id="CLU_033123_0_0_6"/>
<dbReference type="OrthoDB" id="9804062at2"/>
<dbReference type="Proteomes" id="UP000001010">
    <property type="component" value="Chromosome"/>
</dbReference>
<dbReference type="GO" id="GO:0009376">
    <property type="term" value="C:HslUV protease complex"/>
    <property type="evidence" value="ECO:0000318"/>
    <property type="project" value="GO_Central"/>
</dbReference>
<dbReference type="GO" id="GO:0005524">
    <property type="term" value="F:ATP binding"/>
    <property type="evidence" value="ECO:0000318"/>
    <property type="project" value="GO_Central"/>
</dbReference>
<dbReference type="GO" id="GO:0016887">
    <property type="term" value="F:ATP hydrolysis activity"/>
    <property type="evidence" value="ECO:0000318"/>
    <property type="project" value="GO_Central"/>
</dbReference>
<dbReference type="GO" id="GO:0008233">
    <property type="term" value="F:peptidase activity"/>
    <property type="evidence" value="ECO:0007669"/>
    <property type="project" value="InterPro"/>
</dbReference>
<dbReference type="GO" id="GO:0036402">
    <property type="term" value="F:proteasome-activating activity"/>
    <property type="evidence" value="ECO:0007669"/>
    <property type="project" value="UniProtKB-UniRule"/>
</dbReference>
<dbReference type="GO" id="GO:0043335">
    <property type="term" value="P:protein unfolding"/>
    <property type="evidence" value="ECO:0007669"/>
    <property type="project" value="UniProtKB-UniRule"/>
</dbReference>
<dbReference type="GO" id="GO:0051603">
    <property type="term" value="P:proteolysis involved in protein catabolic process"/>
    <property type="evidence" value="ECO:0000318"/>
    <property type="project" value="GO_Central"/>
</dbReference>
<dbReference type="CDD" id="cd19498">
    <property type="entry name" value="RecA-like_HslU"/>
    <property type="match status" value="1"/>
</dbReference>
<dbReference type="FunFam" id="3.40.50.300:FF:000213">
    <property type="entry name" value="ATP-dependent protease ATPase subunit HslU"/>
    <property type="match status" value="1"/>
</dbReference>
<dbReference type="FunFam" id="3.40.50.300:FF:000220">
    <property type="entry name" value="ATP-dependent protease ATPase subunit HslU"/>
    <property type="match status" value="1"/>
</dbReference>
<dbReference type="Gene3D" id="1.10.8.60">
    <property type="match status" value="1"/>
</dbReference>
<dbReference type="Gene3D" id="1.10.8.10">
    <property type="entry name" value="DNA helicase RuvA subunit, C-terminal domain"/>
    <property type="match status" value="2"/>
</dbReference>
<dbReference type="Gene3D" id="3.40.50.300">
    <property type="entry name" value="P-loop containing nucleotide triphosphate hydrolases"/>
    <property type="match status" value="2"/>
</dbReference>
<dbReference type="HAMAP" id="MF_00249">
    <property type="entry name" value="HslU"/>
    <property type="match status" value="1"/>
</dbReference>
<dbReference type="InterPro" id="IPR003593">
    <property type="entry name" value="AAA+_ATPase"/>
</dbReference>
<dbReference type="InterPro" id="IPR050052">
    <property type="entry name" value="ATP-dep_Clp_protease_ClpX"/>
</dbReference>
<dbReference type="InterPro" id="IPR003959">
    <property type="entry name" value="ATPase_AAA_core"/>
</dbReference>
<dbReference type="InterPro" id="IPR019489">
    <property type="entry name" value="Clp_ATPase_C"/>
</dbReference>
<dbReference type="InterPro" id="IPR004491">
    <property type="entry name" value="HslU"/>
</dbReference>
<dbReference type="InterPro" id="IPR027417">
    <property type="entry name" value="P-loop_NTPase"/>
</dbReference>
<dbReference type="NCBIfam" id="TIGR00390">
    <property type="entry name" value="hslU"/>
    <property type="match status" value="1"/>
</dbReference>
<dbReference type="NCBIfam" id="NF003544">
    <property type="entry name" value="PRK05201.1"/>
    <property type="match status" value="1"/>
</dbReference>
<dbReference type="PANTHER" id="PTHR48102">
    <property type="entry name" value="ATP-DEPENDENT CLP PROTEASE ATP-BINDING SUBUNIT CLPX-LIKE, MITOCHONDRIAL-RELATED"/>
    <property type="match status" value="1"/>
</dbReference>
<dbReference type="PANTHER" id="PTHR48102:SF3">
    <property type="entry name" value="ATP-DEPENDENT PROTEASE ATPASE SUBUNIT HSLU"/>
    <property type="match status" value="1"/>
</dbReference>
<dbReference type="Pfam" id="PF00004">
    <property type="entry name" value="AAA"/>
    <property type="match status" value="1"/>
</dbReference>
<dbReference type="Pfam" id="PF07724">
    <property type="entry name" value="AAA_2"/>
    <property type="match status" value="1"/>
</dbReference>
<dbReference type="SMART" id="SM00382">
    <property type="entry name" value="AAA"/>
    <property type="match status" value="1"/>
</dbReference>
<dbReference type="SMART" id="SM01086">
    <property type="entry name" value="ClpB_D2-small"/>
    <property type="match status" value="1"/>
</dbReference>
<dbReference type="SUPFAM" id="SSF52540">
    <property type="entry name" value="P-loop containing nucleoside triphosphate hydrolases"/>
    <property type="match status" value="1"/>
</dbReference>
<name>HSLU_XANCP</name>
<reference key="1">
    <citation type="journal article" date="2002" name="Nature">
        <title>Comparison of the genomes of two Xanthomonas pathogens with differing host specificities.</title>
        <authorList>
            <person name="da Silva A.C.R."/>
            <person name="Ferro J.A."/>
            <person name="Reinach F.C."/>
            <person name="Farah C.S."/>
            <person name="Furlan L.R."/>
            <person name="Quaggio R.B."/>
            <person name="Monteiro-Vitorello C.B."/>
            <person name="Van Sluys M.A."/>
            <person name="Almeida N.F. Jr."/>
            <person name="Alves L.M.C."/>
            <person name="do Amaral A.M."/>
            <person name="Bertolini M.C."/>
            <person name="Camargo L.E.A."/>
            <person name="Camarotte G."/>
            <person name="Cannavan F."/>
            <person name="Cardozo J."/>
            <person name="Chambergo F."/>
            <person name="Ciapina L.P."/>
            <person name="Cicarelli R.M.B."/>
            <person name="Coutinho L.L."/>
            <person name="Cursino-Santos J.R."/>
            <person name="El-Dorry H."/>
            <person name="Faria J.B."/>
            <person name="Ferreira A.J.S."/>
            <person name="Ferreira R.C.C."/>
            <person name="Ferro M.I.T."/>
            <person name="Formighieri E.F."/>
            <person name="Franco M.C."/>
            <person name="Greggio C.C."/>
            <person name="Gruber A."/>
            <person name="Katsuyama A.M."/>
            <person name="Kishi L.T."/>
            <person name="Leite R.P."/>
            <person name="Lemos E.G.M."/>
            <person name="Lemos M.V.F."/>
            <person name="Locali E.C."/>
            <person name="Machado M.A."/>
            <person name="Madeira A.M.B.N."/>
            <person name="Martinez-Rossi N.M."/>
            <person name="Martins E.C."/>
            <person name="Meidanis J."/>
            <person name="Menck C.F.M."/>
            <person name="Miyaki C.Y."/>
            <person name="Moon D.H."/>
            <person name="Moreira L.M."/>
            <person name="Novo M.T.M."/>
            <person name="Okura V.K."/>
            <person name="Oliveira M.C."/>
            <person name="Oliveira V.R."/>
            <person name="Pereira H.A."/>
            <person name="Rossi A."/>
            <person name="Sena J.A.D."/>
            <person name="Silva C."/>
            <person name="de Souza R.F."/>
            <person name="Spinola L.A.F."/>
            <person name="Takita M.A."/>
            <person name="Tamura R.E."/>
            <person name="Teixeira E.C."/>
            <person name="Tezza R.I.D."/>
            <person name="Trindade dos Santos M."/>
            <person name="Truffi D."/>
            <person name="Tsai S.M."/>
            <person name="White F.F."/>
            <person name="Setubal J.C."/>
            <person name="Kitajima J.P."/>
        </authorList>
    </citation>
    <scope>NUCLEOTIDE SEQUENCE [LARGE SCALE GENOMIC DNA]</scope>
    <source>
        <strain>ATCC 33913 / DSM 3586 / NCPPB 528 / LMG 568 / P 25</strain>
    </source>
</reference>
<protein>
    <recommendedName>
        <fullName evidence="1">ATP-dependent protease ATPase subunit HslU</fullName>
    </recommendedName>
    <alternativeName>
        <fullName evidence="1">Unfoldase HslU</fullName>
    </alternativeName>
</protein>
<feature type="chain" id="PRO_0000160564" description="ATP-dependent protease ATPase subunit HslU">
    <location>
        <begin position="1"/>
        <end position="455"/>
    </location>
</feature>
<feature type="binding site" evidence="1">
    <location>
        <position position="23"/>
    </location>
    <ligand>
        <name>ATP</name>
        <dbReference type="ChEBI" id="CHEBI:30616"/>
    </ligand>
</feature>
<feature type="binding site" evidence="1">
    <location>
        <begin position="65"/>
        <end position="70"/>
    </location>
    <ligand>
        <name>ATP</name>
        <dbReference type="ChEBI" id="CHEBI:30616"/>
    </ligand>
</feature>
<feature type="binding site" evidence="1">
    <location>
        <position position="266"/>
    </location>
    <ligand>
        <name>ATP</name>
        <dbReference type="ChEBI" id="CHEBI:30616"/>
    </ligand>
</feature>
<feature type="binding site" evidence="1">
    <location>
        <position position="333"/>
    </location>
    <ligand>
        <name>ATP</name>
        <dbReference type="ChEBI" id="CHEBI:30616"/>
    </ligand>
</feature>
<feature type="binding site" evidence="1">
    <location>
        <position position="405"/>
    </location>
    <ligand>
        <name>ATP</name>
        <dbReference type="ChEBI" id="CHEBI:30616"/>
    </ligand>
</feature>
<sequence>MPNIDTATMTPREIVQELDRHIVGQHDAKRAVAIALRNRWRRMQLPEELRNEVMPKNILMIGPTGVGKTEIARRLATLANAPFVKVEATRFTEVGYVGKDVEQIIRDLADTSVKLYREQAKVRVRNQAEERAEDRILDALLPRRSAGIGFDPEAARHEPSAQDNETRIKFRRMLRNGELDEREIELEVAVNASMDIMTPPGMEEMGQQLRQMFSNLGGGKSQKRKLTIKAARPLLIEEEAGKLVNEDDIRTAAIEACEQHGIVFIDEIDKVAKRGEAGSSGGDVSREGVQRDLLPLVEGSNVSTKYGTVKTDHILFIASGAFHLAKPSDLIPELQGRFPIRVELTALTKADFVRILTEPKAALIKQYEALLQTEGVALTFGADAVDRLAEIAAQVNERQENIGARRLHTVLERLLDVLSYEAPDRDGQSVTVDAAYVDAQLGELVQDPDLSRYIL</sequence>
<accession>Q8P552</accession>
<keyword id="KW-0067">ATP-binding</keyword>
<keyword id="KW-0143">Chaperone</keyword>
<keyword id="KW-0963">Cytoplasm</keyword>
<keyword id="KW-0547">Nucleotide-binding</keyword>
<keyword id="KW-1185">Reference proteome</keyword>